<evidence type="ECO:0000250" key="1"/>
<evidence type="ECO:0000305" key="2"/>
<sequence>MSYKLELLRRALEHNVLKFGTFTLKSGRKSPYFFNSGNFTHGADLCALAEAYAETIIAMNVDFDVIFGPAYKGISLAAITAVKLYEKTGKSYGFAYNRKEAKSHGEGGNLVGAEMEGKKVLLLDDVITAGTAIREAISFLEPKHVKLAGIVLLLDRQERLDPEVNESTIGRLKKELNLPVSSILTLDDIVDFTKSDLTAAESKAMDAYRQQYQAK</sequence>
<name>PYRE_SCHPO</name>
<proteinExistence type="inferred from homology"/>
<dbReference type="EC" id="2.4.2.10"/>
<dbReference type="EMBL" id="CU329671">
    <property type="protein sequence ID" value="CAA22187.1"/>
    <property type="molecule type" value="Genomic_DNA"/>
</dbReference>
<dbReference type="PIR" id="T40667">
    <property type="entry name" value="T40667"/>
</dbReference>
<dbReference type="RefSeq" id="NP_595495.1">
    <property type="nucleotide sequence ID" value="NM_001021406.2"/>
</dbReference>
<dbReference type="SMR" id="O94331"/>
<dbReference type="BioGRID" id="277681">
    <property type="interactions" value="66"/>
</dbReference>
<dbReference type="FunCoup" id="O94331">
    <property type="interactions" value="422"/>
</dbReference>
<dbReference type="STRING" id="284812.O94331"/>
<dbReference type="PaxDb" id="4896-SPBC725.15.1"/>
<dbReference type="EnsemblFungi" id="SPBC725.15.1">
    <property type="protein sequence ID" value="SPBC725.15.1:pep"/>
    <property type="gene ID" value="SPBC725.15"/>
</dbReference>
<dbReference type="GeneID" id="2541166"/>
<dbReference type="KEGG" id="spo:2541166"/>
<dbReference type="PomBase" id="SPBC725.15">
    <property type="gene designation" value="ura5"/>
</dbReference>
<dbReference type="VEuPathDB" id="FungiDB:SPBC725.15"/>
<dbReference type="eggNOG" id="KOG1377">
    <property type="taxonomic scope" value="Eukaryota"/>
</dbReference>
<dbReference type="HOGENOM" id="CLU_074878_0_1_1"/>
<dbReference type="InParanoid" id="O94331"/>
<dbReference type="OMA" id="SPFFMNA"/>
<dbReference type="PhylomeDB" id="O94331"/>
<dbReference type="UniPathway" id="UPA00070">
    <property type="reaction ID" value="UER00119"/>
</dbReference>
<dbReference type="PRO" id="PR:O94331"/>
<dbReference type="Proteomes" id="UP000002485">
    <property type="component" value="Chromosome II"/>
</dbReference>
<dbReference type="GO" id="GO:0005737">
    <property type="term" value="C:cytoplasm"/>
    <property type="evidence" value="ECO:0000318"/>
    <property type="project" value="GO_Central"/>
</dbReference>
<dbReference type="GO" id="GO:0005829">
    <property type="term" value="C:cytosol"/>
    <property type="evidence" value="ECO:0007005"/>
    <property type="project" value="PomBase"/>
</dbReference>
<dbReference type="GO" id="GO:0005634">
    <property type="term" value="C:nucleus"/>
    <property type="evidence" value="ECO:0007005"/>
    <property type="project" value="PomBase"/>
</dbReference>
<dbReference type="GO" id="GO:0004588">
    <property type="term" value="F:orotate phosphoribosyltransferase activity"/>
    <property type="evidence" value="ECO:0000318"/>
    <property type="project" value="GO_Central"/>
</dbReference>
<dbReference type="GO" id="GO:0006207">
    <property type="term" value="P:'de novo' pyrimidine nucleobase biosynthetic process"/>
    <property type="evidence" value="ECO:0000315"/>
    <property type="project" value="PomBase"/>
</dbReference>
<dbReference type="GO" id="GO:0044205">
    <property type="term" value="P:'de novo' UMP biosynthetic process"/>
    <property type="evidence" value="ECO:0007669"/>
    <property type="project" value="UniProtKB-UniPathway"/>
</dbReference>
<dbReference type="GO" id="GO:0006221">
    <property type="term" value="P:pyrimidine nucleotide biosynthetic process"/>
    <property type="evidence" value="ECO:0000318"/>
    <property type="project" value="GO_Central"/>
</dbReference>
<dbReference type="GO" id="GO:0046132">
    <property type="term" value="P:pyrimidine ribonucleoside biosynthetic process"/>
    <property type="evidence" value="ECO:0000318"/>
    <property type="project" value="GO_Central"/>
</dbReference>
<dbReference type="CDD" id="cd06223">
    <property type="entry name" value="PRTases_typeI"/>
    <property type="match status" value="1"/>
</dbReference>
<dbReference type="FunFam" id="3.40.50.2020:FF:000008">
    <property type="entry name" value="Orotate phosphoribosyltransferase"/>
    <property type="match status" value="1"/>
</dbReference>
<dbReference type="Gene3D" id="3.40.50.2020">
    <property type="match status" value="1"/>
</dbReference>
<dbReference type="HAMAP" id="MF_01208">
    <property type="entry name" value="PyrE"/>
    <property type="match status" value="1"/>
</dbReference>
<dbReference type="InterPro" id="IPR023031">
    <property type="entry name" value="OPRT"/>
</dbReference>
<dbReference type="InterPro" id="IPR004467">
    <property type="entry name" value="Or_phspho_trans_dom"/>
</dbReference>
<dbReference type="InterPro" id="IPR000836">
    <property type="entry name" value="PRibTrfase_dom"/>
</dbReference>
<dbReference type="InterPro" id="IPR029057">
    <property type="entry name" value="PRTase-like"/>
</dbReference>
<dbReference type="NCBIfam" id="TIGR00336">
    <property type="entry name" value="pyrE"/>
    <property type="match status" value="1"/>
</dbReference>
<dbReference type="PANTHER" id="PTHR46683">
    <property type="entry name" value="OROTATE PHOSPHORIBOSYLTRANSFERASE 1-RELATED"/>
    <property type="match status" value="1"/>
</dbReference>
<dbReference type="PANTHER" id="PTHR46683:SF1">
    <property type="entry name" value="OROTATE PHOSPHORIBOSYLTRANSFERASE 1-RELATED"/>
    <property type="match status" value="1"/>
</dbReference>
<dbReference type="Pfam" id="PF00156">
    <property type="entry name" value="Pribosyltran"/>
    <property type="match status" value="1"/>
</dbReference>
<dbReference type="SUPFAM" id="SSF53271">
    <property type="entry name" value="PRTase-like"/>
    <property type="match status" value="1"/>
</dbReference>
<dbReference type="PROSITE" id="PS00103">
    <property type="entry name" value="PUR_PYR_PR_TRANSFER"/>
    <property type="match status" value="1"/>
</dbReference>
<gene>
    <name type="primary">ura5</name>
    <name type="ORF">SPBC725.15</name>
</gene>
<feature type="chain" id="PRO_0000110800" description="Orotate phosphoribosyltransferase">
    <location>
        <begin position="1"/>
        <end position="215"/>
    </location>
</feature>
<feature type="binding site" description="in other chain" evidence="1">
    <location>
        <position position="25"/>
    </location>
    <ligand>
        <name>5-phospho-alpha-D-ribose 1-diphosphate</name>
        <dbReference type="ChEBI" id="CHEBI:58017"/>
        <note>ligand shared between dimeric partners</note>
    </ligand>
</feature>
<feature type="binding site" evidence="1">
    <location>
        <begin position="33"/>
        <end position="34"/>
    </location>
    <ligand>
        <name>orotate</name>
        <dbReference type="ChEBI" id="CHEBI:30839"/>
    </ligand>
</feature>
<feature type="binding site" description="in other chain" evidence="1">
    <location>
        <begin position="71"/>
        <end position="72"/>
    </location>
    <ligand>
        <name>5-phospho-alpha-D-ribose 1-diphosphate</name>
        <dbReference type="ChEBI" id="CHEBI:58017"/>
        <note>ligand shared between dimeric partners</note>
    </ligand>
</feature>
<feature type="binding site" evidence="1">
    <location>
        <position position="98"/>
    </location>
    <ligand>
        <name>5-phospho-alpha-D-ribose 1-diphosphate</name>
        <dbReference type="ChEBI" id="CHEBI:58017"/>
        <note>ligand shared between dimeric partners</note>
    </ligand>
</feature>
<feature type="binding site" description="in other chain" evidence="1">
    <location>
        <position position="99"/>
    </location>
    <ligand>
        <name>5-phospho-alpha-D-ribose 1-diphosphate</name>
        <dbReference type="ChEBI" id="CHEBI:58017"/>
        <note>ligand shared between dimeric partners</note>
    </ligand>
</feature>
<feature type="binding site" evidence="1">
    <location>
        <position position="102"/>
    </location>
    <ligand>
        <name>5-phospho-alpha-D-ribose 1-diphosphate</name>
        <dbReference type="ChEBI" id="CHEBI:58017"/>
        <note>ligand shared between dimeric partners</note>
    </ligand>
</feature>
<feature type="binding site" evidence="1">
    <location>
        <position position="104"/>
    </location>
    <ligand>
        <name>5-phospho-alpha-D-ribose 1-diphosphate</name>
        <dbReference type="ChEBI" id="CHEBI:58017"/>
        <note>ligand shared between dimeric partners</note>
    </ligand>
</feature>
<feature type="binding site" description="in other chain" evidence="1">
    <location>
        <begin position="124"/>
        <end position="132"/>
    </location>
    <ligand>
        <name>5-phospho-alpha-D-ribose 1-diphosphate</name>
        <dbReference type="ChEBI" id="CHEBI:58017"/>
        <note>ligand shared between dimeric partners</note>
    </ligand>
</feature>
<feature type="binding site" evidence="1">
    <location>
        <position position="128"/>
    </location>
    <ligand>
        <name>orotate</name>
        <dbReference type="ChEBI" id="CHEBI:30839"/>
    </ligand>
</feature>
<feature type="binding site" evidence="1">
    <location>
        <position position="156"/>
    </location>
    <ligand>
        <name>orotate</name>
        <dbReference type="ChEBI" id="CHEBI:30839"/>
    </ligand>
</feature>
<protein>
    <recommendedName>
        <fullName>Orotate phosphoribosyltransferase</fullName>
        <shortName>OPRT</shortName>
        <shortName>OPRTase</shortName>
        <ecNumber>2.4.2.10</ecNumber>
    </recommendedName>
</protein>
<keyword id="KW-0328">Glycosyltransferase</keyword>
<keyword id="KW-0665">Pyrimidine biosynthesis</keyword>
<keyword id="KW-1185">Reference proteome</keyword>
<keyword id="KW-0808">Transferase</keyword>
<reference key="1">
    <citation type="journal article" date="2002" name="Nature">
        <title>The genome sequence of Schizosaccharomyces pombe.</title>
        <authorList>
            <person name="Wood V."/>
            <person name="Gwilliam R."/>
            <person name="Rajandream M.A."/>
            <person name="Lyne M.H."/>
            <person name="Lyne R."/>
            <person name="Stewart A."/>
            <person name="Sgouros J.G."/>
            <person name="Peat N."/>
            <person name="Hayles J."/>
            <person name="Baker S.G."/>
            <person name="Basham D."/>
            <person name="Bowman S."/>
            <person name="Brooks K."/>
            <person name="Brown D."/>
            <person name="Brown S."/>
            <person name="Chillingworth T."/>
            <person name="Churcher C.M."/>
            <person name="Collins M."/>
            <person name="Connor R."/>
            <person name="Cronin A."/>
            <person name="Davis P."/>
            <person name="Feltwell T."/>
            <person name="Fraser A."/>
            <person name="Gentles S."/>
            <person name="Goble A."/>
            <person name="Hamlin N."/>
            <person name="Harris D.E."/>
            <person name="Hidalgo J."/>
            <person name="Hodgson G."/>
            <person name="Holroyd S."/>
            <person name="Hornsby T."/>
            <person name="Howarth S."/>
            <person name="Huckle E.J."/>
            <person name="Hunt S."/>
            <person name="Jagels K."/>
            <person name="James K.D."/>
            <person name="Jones L."/>
            <person name="Jones M."/>
            <person name="Leather S."/>
            <person name="McDonald S."/>
            <person name="McLean J."/>
            <person name="Mooney P."/>
            <person name="Moule S."/>
            <person name="Mungall K.L."/>
            <person name="Murphy L.D."/>
            <person name="Niblett D."/>
            <person name="Odell C."/>
            <person name="Oliver K."/>
            <person name="O'Neil S."/>
            <person name="Pearson D."/>
            <person name="Quail M.A."/>
            <person name="Rabbinowitsch E."/>
            <person name="Rutherford K.M."/>
            <person name="Rutter S."/>
            <person name="Saunders D."/>
            <person name="Seeger K."/>
            <person name="Sharp S."/>
            <person name="Skelton J."/>
            <person name="Simmonds M.N."/>
            <person name="Squares R."/>
            <person name="Squares S."/>
            <person name="Stevens K."/>
            <person name="Taylor K."/>
            <person name="Taylor R.G."/>
            <person name="Tivey A."/>
            <person name="Walsh S.V."/>
            <person name="Warren T."/>
            <person name="Whitehead S."/>
            <person name="Woodward J.R."/>
            <person name="Volckaert G."/>
            <person name="Aert R."/>
            <person name="Robben J."/>
            <person name="Grymonprez B."/>
            <person name="Weltjens I."/>
            <person name="Vanstreels E."/>
            <person name="Rieger M."/>
            <person name="Schaefer M."/>
            <person name="Mueller-Auer S."/>
            <person name="Gabel C."/>
            <person name="Fuchs M."/>
            <person name="Duesterhoeft A."/>
            <person name="Fritzc C."/>
            <person name="Holzer E."/>
            <person name="Moestl D."/>
            <person name="Hilbert H."/>
            <person name="Borzym K."/>
            <person name="Langer I."/>
            <person name="Beck A."/>
            <person name="Lehrach H."/>
            <person name="Reinhardt R."/>
            <person name="Pohl T.M."/>
            <person name="Eger P."/>
            <person name="Zimmermann W."/>
            <person name="Wedler H."/>
            <person name="Wambutt R."/>
            <person name="Purnelle B."/>
            <person name="Goffeau A."/>
            <person name="Cadieu E."/>
            <person name="Dreano S."/>
            <person name="Gloux S."/>
            <person name="Lelaure V."/>
            <person name="Mottier S."/>
            <person name="Galibert F."/>
            <person name="Aves S.J."/>
            <person name="Xiang Z."/>
            <person name="Hunt C."/>
            <person name="Moore K."/>
            <person name="Hurst S.M."/>
            <person name="Lucas M."/>
            <person name="Rochet M."/>
            <person name="Gaillardin C."/>
            <person name="Tallada V.A."/>
            <person name="Garzon A."/>
            <person name="Thode G."/>
            <person name="Daga R.R."/>
            <person name="Cruzado L."/>
            <person name="Jimenez J."/>
            <person name="Sanchez M."/>
            <person name="del Rey F."/>
            <person name="Benito J."/>
            <person name="Dominguez A."/>
            <person name="Revuelta J.L."/>
            <person name="Moreno S."/>
            <person name="Armstrong J."/>
            <person name="Forsburg S.L."/>
            <person name="Cerutti L."/>
            <person name="Lowe T."/>
            <person name="McCombie W.R."/>
            <person name="Paulsen I."/>
            <person name="Potashkin J."/>
            <person name="Shpakovski G.V."/>
            <person name="Ussery D."/>
            <person name="Barrell B.G."/>
            <person name="Nurse P."/>
        </authorList>
    </citation>
    <scope>NUCLEOTIDE SEQUENCE [LARGE SCALE GENOMIC DNA]</scope>
    <source>
        <strain>972 / ATCC 24843</strain>
    </source>
</reference>
<organism>
    <name type="scientific">Schizosaccharomyces pombe (strain 972 / ATCC 24843)</name>
    <name type="common">Fission yeast</name>
    <dbReference type="NCBI Taxonomy" id="284812"/>
    <lineage>
        <taxon>Eukaryota</taxon>
        <taxon>Fungi</taxon>
        <taxon>Dikarya</taxon>
        <taxon>Ascomycota</taxon>
        <taxon>Taphrinomycotina</taxon>
        <taxon>Schizosaccharomycetes</taxon>
        <taxon>Schizosaccharomycetales</taxon>
        <taxon>Schizosaccharomycetaceae</taxon>
        <taxon>Schizosaccharomyces</taxon>
    </lineage>
</organism>
<comment type="function">
    <text evidence="1">Catalyzes the transfer of a ribosyl phosphate group from 5-phosphoribose 1-diphosphate to orotate, leading to the formation of orotidine monophosphate (OMP).</text>
</comment>
<comment type="catalytic activity">
    <reaction>
        <text>orotidine 5'-phosphate + diphosphate = orotate + 5-phospho-alpha-D-ribose 1-diphosphate</text>
        <dbReference type="Rhea" id="RHEA:10380"/>
        <dbReference type="ChEBI" id="CHEBI:30839"/>
        <dbReference type="ChEBI" id="CHEBI:33019"/>
        <dbReference type="ChEBI" id="CHEBI:57538"/>
        <dbReference type="ChEBI" id="CHEBI:58017"/>
        <dbReference type="EC" id="2.4.2.10"/>
    </reaction>
</comment>
<comment type="pathway">
    <text>Pyrimidine metabolism; UMP biosynthesis via de novo pathway; UMP from orotate: step 1/2.</text>
</comment>
<comment type="subunit">
    <text evidence="1">Homodimer.</text>
</comment>
<comment type="similarity">
    <text evidence="2">Belongs to the purine/pyrimidine phosphoribosyltransferase family. PyrE subfamily.</text>
</comment>
<accession>O94331</accession>